<evidence type="ECO:0000255" key="1">
    <source>
        <dbReference type="HAMAP-Rule" id="MF_00532"/>
    </source>
</evidence>
<evidence type="ECO:0000305" key="2"/>
<protein>
    <recommendedName>
        <fullName evidence="1">Small ribosomal subunit protein uS9</fullName>
    </recommendedName>
    <alternativeName>
        <fullName evidence="2">30S ribosomal protein S9</fullName>
    </alternativeName>
</protein>
<feature type="chain" id="PRO_1000128193" description="Small ribosomal subunit protein uS9">
    <location>
        <begin position="1"/>
        <end position="133"/>
    </location>
</feature>
<organism>
    <name type="scientific">Ureaplasma urealyticum serovar 10 (strain ATCC 33699 / Western)</name>
    <dbReference type="NCBI Taxonomy" id="565575"/>
    <lineage>
        <taxon>Bacteria</taxon>
        <taxon>Bacillati</taxon>
        <taxon>Mycoplasmatota</taxon>
        <taxon>Mycoplasmoidales</taxon>
        <taxon>Mycoplasmoidaceae</taxon>
        <taxon>Ureaplasma</taxon>
    </lineage>
</organism>
<comment type="similarity">
    <text evidence="1">Belongs to the universal ribosomal protein uS9 family.</text>
</comment>
<dbReference type="EMBL" id="CP001184">
    <property type="protein sequence ID" value="ACI59732.1"/>
    <property type="molecule type" value="Genomic_DNA"/>
</dbReference>
<dbReference type="RefSeq" id="WP_004026084.1">
    <property type="nucleotide sequence ID" value="NC_011374.1"/>
</dbReference>
<dbReference type="SMR" id="B5ZC90"/>
<dbReference type="STRING" id="565575.UUR10_0676"/>
<dbReference type="GeneID" id="93849129"/>
<dbReference type="KEGG" id="uue:UUR10_0676"/>
<dbReference type="eggNOG" id="COG0103">
    <property type="taxonomic scope" value="Bacteria"/>
</dbReference>
<dbReference type="HOGENOM" id="CLU_046483_2_1_14"/>
<dbReference type="OrthoDB" id="9803965at2"/>
<dbReference type="Proteomes" id="UP000002018">
    <property type="component" value="Chromosome"/>
</dbReference>
<dbReference type="GO" id="GO:0022627">
    <property type="term" value="C:cytosolic small ribosomal subunit"/>
    <property type="evidence" value="ECO:0007669"/>
    <property type="project" value="TreeGrafter"/>
</dbReference>
<dbReference type="GO" id="GO:0003723">
    <property type="term" value="F:RNA binding"/>
    <property type="evidence" value="ECO:0007669"/>
    <property type="project" value="TreeGrafter"/>
</dbReference>
<dbReference type="GO" id="GO:0003735">
    <property type="term" value="F:structural constituent of ribosome"/>
    <property type="evidence" value="ECO:0007669"/>
    <property type="project" value="InterPro"/>
</dbReference>
<dbReference type="GO" id="GO:0006412">
    <property type="term" value="P:translation"/>
    <property type="evidence" value="ECO:0007669"/>
    <property type="project" value="UniProtKB-UniRule"/>
</dbReference>
<dbReference type="FunFam" id="3.30.230.10:FF:000001">
    <property type="entry name" value="30S ribosomal protein S9"/>
    <property type="match status" value="1"/>
</dbReference>
<dbReference type="Gene3D" id="3.30.230.10">
    <property type="match status" value="1"/>
</dbReference>
<dbReference type="HAMAP" id="MF_00532_B">
    <property type="entry name" value="Ribosomal_uS9_B"/>
    <property type="match status" value="1"/>
</dbReference>
<dbReference type="InterPro" id="IPR020568">
    <property type="entry name" value="Ribosomal_Su5_D2-typ_SF"/>
</dbReference>
<dbReference type="InterPro" id="IPR000754">
    <property type="entry name" value="Ribosomal_uS9"/>
</dbReference>
<dbReference type="InterPro" id="IPR023035">
    <property type="entry name" value="Ribosomal_uS9_bac/plastid"/>
</dbReference>
<dbReference type="InterPro" id="IPR020574">
    <property type="entry name" value="Ribosomal_uS9_CS"/>
</dbReference>
<dbReference type="InterPro" id="IPR014721">
    <property type="entry name" value="Ribsml_uS5_D2-typ_fold_subgr"/>
</dbReference>
<dbReference type="NCBIfam" id="NF001099">
    <property type="entry name" value="PRK00132.1"/>
    <property type="match status" value="1"/>
</dbReference>
<dbReference type="PANTHER" id="PTHR21569">
    <property type="entry name" value="RIBOSOMAL PROTEIN S9"/>
    <property type="match status" value="1"/>
</dbReference>
<dbReference type="PANTHER" id="PTHR21569:SF1">
    <property type="entry name" value="SMALL RIBOSOMAL SUBUNIT PROTEIN US9M"/>
    <property type="match status" value="1"/>
</dbReference>
<dbReference type="Pfam" id="PF00380">
    <property type="entry name" value="Ribosomal_S9"/>
    <property type="match status" value="1"/>
</dbReference>
<dbReference type="SUPFAM" id="SSF54211">
    <property type="entry name" value="Ribosomal protein S5 domain 2-like"/>
    <property type="match status" value="1"/>
</dbReference>
<dbReference type="PROSITE" id="PS00360">
    <property type="entry name" value="RIBOSOMAL_S9"/>
    <property type="match status" value="1"/>
</dbReference>
<accession>B5ZC90</accession>
<proteinExistence type="inferred from homology"/>
<sequence>MQKSNIVEYKGLGRRKSSIARVKLVPGSGKVFINDRQPENYFPNKLVIQDMMQPLVLTKTAETYDVYVKVIGGGFNGQAGAIRLGITRALIQTREDLKTDLRKAGLVTRDSRVKERKKFGLYGARRAPQFTKR</sequence>
<keyword id="KW-0687">Ribonucleoprotein</keyword>
<keyword id="KW-0689">Ribosomal protein</keyword>
<name>RS9_UREU1</name>
<gene>
    <name evidence="1" type="primary">rpsI</name>
    <name type="ordered locus">UUR10_0676</name>
</gene>
<reference key="1">
    <citation type="submission" date="2008-10" db="EMBL/GenBank/DDBJ databases">
        <title>Genome sequence of Ureaplasma urealyticum serovar 10 ATCC-33699.</title>
        <authorList>
            <person name="Shrivastava S."/>
            <person name="Methe B.A."/>
            <person name="Glass J."/>
            <person name="White K."/>
            <person name="Duffy L.B."/>
        </authorList>
    </citation>
    <scope>NUCLEOTIDE SEQUENCE [LARGE SCALE GENOMIC DNA]</scope>
    <source>
        <strain>ATCC 33699 / Western</strain>
    </source>
</reference>